<organism>
    <name type="scientific">Saccharolobus islandicus (strain M.16.4 / Kamchatka #3)</name>
    <name type="common">Sulfolobus islandicus</name>
    <dbReference type="NCBI Taxonomy" id="426118"/>
    <lineage>
        <taxon>Archaea</taxon>
        <taxon>Thermoproteota</taxon>
        <taxon>Thermoprotei</taxon>
        <taxon>Sulfolobales</taxon>
        <taxon>Sulfolobaceae</taxon>
        <taxon>Saccharolobus</taxon>
    </lineage>
</organism>
<sequence>MVKHSRGYRTRSRSLLRKSPRERGAVPSLSRLMVEYKEGDKVVIKINPSVHSGMPHRRYQGKVGKIIGKRGRAYLVSVTLGDKEKVIIVRPEHLVSFSSSG</sequence>
<evidence type="ECO:0000255" key="1">
    <source>
        <dbReference type="HAMAP-Rule" id="MF_00369"/>
    </source>
</evidence>
<evidence type="ECO:0000256" key="2">
    <source>
        <dbReference type="SAM" id="MobiDB-lite"/>
    </source>
</evidence>
<evidence type="ECO:0000305" key="3"/>
<feature type="chain" id="PRO_1000205574" description="Large ribosomal subunit protein eL21">
    <location>
        <begin position="1"/>
        <end position="101"/>
    </location>
</feature>
<feature type="region of interest" description="Disordered" evidence="2">
    <location>
        <begin position="1"/>
        <end position="23"/>
    </location>
</feature>
<feature type="compositionally biased region" description="Basic residues" evidence="2">
    <location>
        <begin position="1"/>
        <end position="18"/>
    </location>
</feature>
<dbReference type="EMBL" id="CP001402">
    <property type="protein sequence ID" value="ACR41990.1"/>
    <property type="molecule type" value="Genomic_DNA"/>
</dbReference>
<dbReference type="RefSeq" id="WP_012711388.1">
    <property type="nucleotide sequence ID" value="NC_012726.1"/>
</dbReference>
<dbReference type="SMR" id="C4KHC6"/>
<dbReference type="KEGG" id="sid:M164_1384"/>
<dbReference type="HOGENOM" id="CLU_103610_1_1_2"/>
<dbReference type="Proteomes" id="UP000001479">
    <property type="component" value="Chromosome"/>
</dbReference>
<dbReference type="GO" id="GO:1990904">
    <property type="term" value="C:ribonucleoprotein complex"/>
    <property type="evidence" value="ECO:0007669"/>
    <property type="project" value="UniProtKB-KW"/>
</dbReference>
<dbReference type="GO" id="GO:0005840">
    <property type="term" value="C:ribosome"/>
    <property type="evidence" value="ECO:0007669"/>
    <property type="project" value="UniProtKB-KW"/>
</dbReference>
<dbReference type="GO" id="GO:0003735">
    <property type="term" value="F:structural constituent of ribosome"/>
    <property type="evidence" value="ECO:0007669"/>
    <property type="project" value="InterPro"/>
</dbReference>
<dbReference type="GO" id="GO:0006412">
    <property type="term" value="P:translation"/>
    <property type="evidence" value="ECO:0007669"/>
    <property type="project" value="UniProtKB-UniRule"/>
</dbReference>
<dbReference type="FunFam" id="2.30.30.70:FF:000001">
    <property type="entry name" value="60S ribosomal protein L21"/>
    <property type="match status" value="1"/>
</dbReference>
<dbReference type="Gene3D" id="2.30.30.70">
    <property type="entry name" value="Ribosomal protein L21"/>
    <property type="match status" value="1"/>
</dbReference>
<dbReference type="HAMAP" id="MF_00369">
    <property type="entry name" value="Ribosomal_eL21"/>
    <property type="match status" value="1"/>
</dbReference>
<dbReference type="InterPro" id="IPR001147">
    <property type="entry name" value="Ribosomal_eL21"/>
</dbReference>
<dbReference type="InterPro" id="IPR022856">
    <property type="entry name" value="Ribosomal_eL21_arc"/>
</dbReference>
<dbReference type="InterPro" id="IPR018259">
    <property type="entry name" value="Ribosomal_eL21_CS"/>
</dbReference>
<dbReference type="InterPro" id="IPR036948">
    <property type="entry name" value="Ribosomal_eL21_sf"/>
</dbReference>
<dbReference type="InterPro" id="IPR008991">
    <property type="entry name" value="Translation_prot_SH3-like_sf"/>
</dbReference>
<dbReference type="NCBIfam" id="NF003303">
    <property type="entry name" value="PRK04306.1"/>
    <property type="match status" value="1"/>
</dbReference>
<dbReference type="PANTHER" id="PTHR20981">
    <property type="entry name" value="60S RIBOSOMAL PROTEIN L21"/>
    <property type="match status" value="1"/>
</dbReference>
<dbReference type="Pfam" id="PF01157">
    <property type="entry name" value="Ribosomal_L21e"/>
    <property type="match status" value="1"/>
</dbReference>
<dbReference type="SUPFAM" id="SSF50104">
    <property type="entry name" value="Translation proteins SH3-like domain"/>
    <property type="match status" value="1"/>
</dbReference>
<dbReference type="PROSITE" id="PS01171">
    <property type="entry name" value="RIBOSOMAL_L21E"/>
    <property type="match status" value="1"/>
</dbReference>
<reference key="1">
    <citation type="journal article" date="2009" name="Proc. Natl. Acad. Sci. U.S.A.">
        <title>Biogeography of the Sulfolobus islandicus pan-genome.</title>
        <authorList>
            <person name="Reno M.L."/>
            <person name="Held N.L."/>
            <person name="Fields C.J."/>
            <person name="Burke P.V."/>
            <person name="Whitaker R.J."/>
        </authorList>
    </citation>
    <scope>NUCLEOTIDE SEQUENCE [LARGE SCALE GENOMIC DNA]</scope>
    <source>
        <strain>M.16.4 / Kamchatka #3</strain>
    </source>
</reference>
<name>RL21_SACI6</name>
<accession>C4KHC6</accession>
<comment type="similarity">
    <text evidence="1">Belongs to the eukaryotic ribosomal protein eL21 family.</text>
</comment>
<keyword id="KW-0687">Ribonucleoprotein</keyword>
<keyword id="KW-0689">Ribosomal protein</keyword>
<proteinExistence type="inferred from homology"/>
<protein>
    <recommendedName>
        <fullName evidence="1">Large ribosomal subunit protein eL21</fullName>
    </recommendedName>
    <alternativeName>
        <fullName evidence="3">50S ribosomal protein L21e</fullName>
    </alternativeName>
</protein>
<gene>
    <name evidence="1" type="primary">rpl21e</name>
    <name type="ordered locus">M164_1384</name>
</gene>